<sequence length="354" mass="37705">MGTKGLPLYPDPCRAPGTKTQNTLASDSLAREGPSSNSSFHSSEEEGTDLEGDMLDCSGSRPLLESEEEDENCRPLQEKLGEAALFSESGVCTEPEERGQGGKKSQFLPINQRASDDLGEPDVFATAPFRSSLVPADDVDIFSKAPFVSKGSVAPSQMDEVDVFSRAPFTKKRSMEEFLAVQGSSQDLPMQANLSQSNEGPLLAGRDRAIYTPAQAQYPMTGFAPQAGLPSHSVQVADHFDGNSPRGSPMSSGGHPVDRNRGLQPQKEAFSGPAAGKPFHPQALSKYSRHYSPEDELSAEAQPIAAYKIVSQSNKQLLAGSVSVTSLSSRTTELATADPFALAPFPSKAGKQKP</sequence>
<accession>Q6PIU9</accession>
<accession>Q8BPJ9</accession>
<keyword id="KW-0007">Acetylation</keyword>
<keyword id="KW-0597">Phosphoprotein</keyword>
<keyword id="KW-1185">Reference proteome</keyword>
<dbReference type="EMBL" id="AC159712">
    <property type="status" value="NOT_ANNOTATED_CDS"/>
    <property type="molecule type" value="Genomic_DNA"/>
</dbReference>
<dbReference type="EMBL" id="AK053876">
    <property type="protein sequence ID" value="BAC35570.1"/>
    <property type="status" value="ALT_INIT"/>
    <property type="molecule type" value="mRNA"/>
</dbReference>
<dbReference type="EMBL" id="BC028270">
    <property type="protein sequence ID" value="AAH28270.2"/>
    <property type="status" value="ALT_INIT"/>
    <property type="molecule type" value="mRNA"/>
</dbReference>
<dbReference type="RefSeq" id="XP_006506900.1">
    <property type="nucleotide sequence ID" value="XM_006506837.2"/>
</dbReference>
<dbReference type="BioGRID" id="3411662">
    <property type="interactions" value="2"/>
</dbReference>
<dbReference type="IntAct" id="Q6PIU9">
    <property type="interactions" value="1"/>
</dbReference>
<dbReference type="MINT" id="Q6PIU9"/>
<dbReference type="GlyGen" id="Q6PIU9">
    <property type="glycosylation" value="1 site, 1 O-linked glycan (1 site)"/>
</dbReference>
<dbReference type="iPTMnet" id="Q6PIU9"/>
<dbReference type="PhosphoSitePlus" id="Q6PIU9"/>
<dbReference type="SwissPalm" id="Q6PIU9"/>
<dbReference type="jPOST" id="Q6PIU9"/>
<dbReference type="PeptideAtlas" id="Q6PIU9"/>
<dbReference type="Pumba" id="Q6PIU9"/>
<dbReference type="DNASU" id="269774"/>
<dbReference type="AGR" id="MGI:1098687"/>
<dbReference type="InParanoid" id="Q6PIU9"/>
<dbReference type="Proteomes" id="UP000000589">
    <property type="component" value="Unplaced"/>
</dbReference>
<dbReference type="RNAct" id="Q6PIU9">
    <property type="molecule type" value="protein"/>
</dbReference>
<dbReference type="InterPro" id="IPR051744">
    <property type="entry name" value="AP2_assoc_SerThr_kinase"/>
</dbReference>
<dbReference type="InterPro" id="IPR028182">
    <property type="entry name" value="BMP2K_C"/>
</dbReference>
<dbReference type="PANTHER" id="PTHR47907:SF3">
    <property type="entry name" value="AP2-ASSOCIATED PROTEIN KINASE 1"/>
    <property type="match status" value="1"/>
</dbReference>
<dbReference type="PANTHER" id="PTHR47907">
    <property type="entry name" value="PROTEIN KINASE DOMAIN-CONTAINING PROTEIN"/>
    <property type="match status" value="1"/>
</dbReference>
<dbReference type="Pfam" id="PF15282">
    <property type="entry name" value="BMP2K_C"/>
    <property type="match status" value="1"/>
</dbReference>
<reference key="1">
    <citation type="journal article" date="2009" name="PLoS Biol.">
        <title>Lineage-specific biology revealed by a finished genome assembly of the mouse.</title>
        <authorList>
            <person name="Church D.M."/>
            <person name="Goodstadt L."/>
            <person name="Hillier L.W."/>
            <person name="Zody M.C."/>
            <person name="Goldstein S."/>
            <person name="She X."/>
            <person name="Bult C.J."/>
            <person name="Agarwala R."/>
            <person name="Cherry J.L."/>
            <person name="DiCuccio M."/>
            <person name="Hlavina W."/>
            <person name="Kapustin Y."/>
            <person name="Meric P."/>
            <person name="Maglott D."/>
            <person name="Birtle Z."/>
            <person name="Marques A.C."/>
            <person name="Graves T."/>
            <person name="Zhou S."/>
            <person name="Teague B."/>
            <person name="Potamousis K."/>
            <person name="Churas C."/>
            <person name="Place M."/>
            <person name="Herschleb J."/>
            <person name="Runnheim R."/>
            <person name="Forrest D."/>
            <person name="Amos-Landgraf J."/>
            <person name="Schwartz D.C."/>
            <person name="Cheng Z."/>
            <person name="Lindblad-Toh K."/>
            <person name="Eichler E.E."/>
            <person name="Ponting C.P."/>
        </authorList>
    </citation>
    <scope>NUCLEOTIDE SEQUENCE [LARGE SCALE GENOMIC DNA]</scope>
    <source>
        <strain>C57BL/6J</strain>
    </source>
</reference>
<reference key="2">
    <citation type="journal article" date="2005" name="Science">
        <title>The transcriptional landscape of the mammalian genome.</title>
        <authorList>
            <person name="Carninci P."/>
            <person name="Kasukawa T."/>
            <person name="Katayama S."/>
            <person name="Gough J."/>
            <person name="Frith M.C."/>
            <person name="Maeda N."/>
            <person name="Oyama R."/>
            <person name="Ravasi T."/>
            <person name="Lenhard B."/>
            <person name="Wells C."/>
            <person name="Kodzius R."/>
            <person name="Shimokawa K."/>
            <person name="Bajic V.B."/>
            <person name="Brenner S.E."/>
            <person name="Batalov S."/>
            <person name="Forrest A.R."/>
            <person name="Zavolan M."/>
            <person name="Davis M.J."/>
            <person name="Wilming L.G."/>
            <person name="Aidinis V."/>
            <person name="Allen J.E."/>
            <person name="Ambesi-Impiombato A."/>
            <person name="Apweiler R."/>
            <person name="Aturaliya R.N."/>
            <person name="Bailey T.L."/>
            <person name="Bansal M."/>
            <person name="Baxter L."/>
            <person name="Beisel K.W."/>
            <person name="Bersano T."/>
            <person name="Bono H."/>
            <person name="Chalk A.M."/>
            <person name="Chiu K.P."/>
            <person name="Choudhary V."/>
            <person name="Christoffels A."/>
            <person name="Clutterbuck D.R."/>
            <person name="Crowe M.L."/>
            <person name="Dalla E."/>
            <person name="Dalrymple B.P."/>
            <person name="de Bono B."/>
            <person name="Della Gatta G."/>
            <person name="di Bernardo D."/>
            <person name="Down T."/>
            <person name="Engstrom P."/>
            <person name="Fagiolini M."/>
            <person name="Faulkner G."/>
            <person name="Fletcher C.F."/>
            <person name="Fukushima T."/>
            <person name="Furuno M."/>
            <person name="Futaki S."/>
            <person name="Gariboldi M."/>
            <person name="Georgii-Hemming P."/>
            <person name="Gingeras T.R."/>
            <person name="Gojobori T."/>
            <person name="Green R.E."/>
            <person name="Gustincich S."/>
            <person name="Harbers M."/>
            <person name="Hayashi Y."/>
            <person name="Hensch T.K."/>
            <person name="Hirokawa N."/>
            <person name="Hill D."/>
            <person name="Huminiecki L."/>
            <person name="Iacono M."/>
            <person name="Ikeo K."/>
            <person name="Iwama A."/>
            <person name="Ishikawa T."/>
            <person name="Jakt M."/>
            <person name="Kanapin A."/>
            <person name="Katoh M."/>
            <person name="Kawasawa Y."/>
            <person name="Kelso J."/>
            <person name="Kitamura H."/>
            <person name="Kitano H."/>
            <person name="Kollias G."/>
            <person name="Krishnan S.P."/>
            <person name="Kruger A."/>
            <person name="Kummerfeld S.K."/>
            <person name="Kurochkin I.V."/>
            <person name="Lareau L.F."/>
            <person name="Lazarevic D."/>
            <person name="Lipovich L."/>
            <person name="Liu J."/>
            <person name="Liuni S."/>
            <person name="McWilliam S."/>
            <person name="Madan Babu M."/>
            <person name="Madera M."/>
            <person name="Marchionni L."/>
            <person name="Matsuda H."/>
            <person name="Matsuzawa S."/>
            <person name="Miki H."/>
            <person name="Mignone F."/>
            <person name="Miyake S."/>
            <person name="Morris K."/>
            <person name="Mottagui-Tabar S."/>
            <person name="Mulder N."/>
            <person name="Nakano N."/>
            <person name="Nakauchi H."/>
            <person name="Ng P."/>
            <person name="Nilsson R."/>
            <person name="Nishiguchi S."/>
            <person name="Nishikawa S."/>
            <person name="Nori F."/>
            <person name="Ohara O."/>
            <person name="Okazaki Y."/>
            <person name="Orlando V."/>
            <person name="Pang K.C."/>
            <person name="Pavan W.J."/>
            <person name="Pavesi G."/>
            <person name="Pesole G."/>
            <person name="Petrovsky N."/>
            <person name="Piazza S."/>
            <person name="Reed J."/>
            <person name="Reid J.F."/>
            <person name="Ring B.Z."/>
            <person name="Ringwald M."/>
            <person name="Rost B."/>
            <person name="Ruan Y."/>
            <person name="Salzberg S.L."/>
            <person name="Sandelin A."/>
            <person name="Schneider C."/>
            <person name="Schoenbach C."/>
            <person name="Sekiguchi K."/>
            <person name="Semple C.A."/>
            <person name="Seno S."/>
            <person name="Sessa L."/>
            <person name="Sheng Y."/>
            <person name="Shibata Y."/>
            <person name="Shimada H."/>
            <person name="Shimada K."/>
            <person name="Silva D."/>
            <person name="Sinclair B."/>
            <person name="Sperling S."/>
            <person name="Stupka E."/>
            <person name="Sugiura K."/>
            <person name="Sultana R."/>
            <person name="Takenaka Y."/>
            <person name="Taki K."/>
            <person name="Tammoja K."/>
            <person name="Tan S.L."/>
            <person name="Tang S."/>
            <person name="Taylor M.S."/>
            <person name="Tegner J."/>
            <person name="Teichmann S.A."/>
            <person name="Ueda H.R."/>
            <person name="van Nimwegen E."/>
            <person name="Verardo R."/>
            <person name="Wei C.L."/>
            <person name="Yagi K."/>
            <person name="Yamanishi H."/>
            <person name="Zabarovsky E."/>
            <person name="Zhu S."/>
            <person name="Zimmer A."/>
            <person name="Hide W."/>
            <person name="Bult C."/>
            <person name="Grimmond S.M."/>
            <person name="Teasdale R.D."/>
            <person name="Liu E.T."/>
            <person name="Brusic V."/>
            <person name="Quackenbush J."/>
            <person name="Wahlestedt C."/>
            <person name="Mattick J.S."/>
            <person name="Hume D.A."/>
            <person name="Kai C."/>
            <person name="Sasaki D."/>
            <person name="Tomaru Y."/>
            <person name="Fukuda S."/>
            <person name="Kanamori-Katayama M."/>
            <person name="Suzuki M."/>
            <person name="Aoki J."/>
            <person name="Arakawa T."/>
            <person name="Iida J."/>
            <person name="Imamura K."/>
            <person name="Itoh M."/>
            <person name="Kato T."/>
            <person name="Kawaji H."/>
            <person name="Kawagashira N."/>
            <person name="Kawashima T."/>
            <person name="Kojima M."/>
            <person name="Kondo S."/>
            <person name="Konno H."/>
            <person name="Nakano K."/>
            <person name="Ninomiya N."/>
            <person name="Nishio T."/>
            <person name="Okada M."/>
            <person name="Plessy C."/>
            <person name="Shibata K."/>
            <person name="Shiraki T."/>
            <person name="Suzuki S."/>
            <person name="Tagami M."/>
            <person name="Waki K."/>
            <person name="Watahiki A."/>
            <person name="Okamura-Oho Y."/>
            <person name="Suzuki H."/>
            <person name="Kawai J."/>
            <person name="Hayashizaki Y."/>
        </authorList>
    </citation>
    <scope>NUCLEOTIDE SEQUENCE [LARGE SCALE MRNA] OF 197-354</scope>
    <source>
        <strain>C57BL/6J</strain>
        <tissue>Eye</tissue>
    </source>
</reference>
<reference key="3">
    <citation type="journal article" date="2004" name="Genome Res.">
        <title>The status, quality, and expansion of the NIH full-length cDNA project: the Mammalian Gene Collection (MGC).</title>
        <authorList>
            <consortium name="The MGC Project Team"/>
        </authorList>
    </citation>
    <scope>NUCLEOTIDE SEQUENCE [LARGE SCALE MRNA] OF 200-354</scope>
    <source>
        <tissue>Eye</tissue>
    </source>
</reference>
<reference key="4">
    <citation type="journal article" date="2007" name="Proc. Natl. Acad. Sci. U.S.A.">
        <title>Large-scale phosphorylation analysis of mouse liver.</title>
        <authorList>
            <person name="Villen J."/>
            <person name="Beausoleil S.A."/>
            <person name="Gerber S.A."/>
            <person name="Gygi S.P."/>
        </authorList>
    </citation>
    <scope>PHOSPHORYLATION [LARGE SCALE ANALYSIS] AT SER-115 AND SER-292</scope>
    <scope>IDENTIFICATION BY MASS SPECTROMETRY [LARGE SCALE ANALYSIS]</scope>
    <source>
        <tissue>Liver</tissue>
    </source>
</reference>
<reference key="5">
    <citation type="journal article" date="2009" name="Immunity">
        <title>The phagosomal proteome in interferon-gamma-activated macrophages.</title>
        <authorList>
            <person name="Trost M."/>
            <person name="English L."/>
            <person name="Lemieux S."/>
            <person name="Courcelles M."/>
            <person name="Desjardins M."/>
            <person name="Thibault P."/>
        </authorList>
    </citation>
    <scope>PHOSPHORYLATION [LARGE SCALE ANALYSIS] AT SER-115</scope>
    <scope>IDENTIFICATION BY MASS SPECTROMETRY [LARGE SCALE ANALYSIS]</scope>
</reference>
<reference key="6">
    <citation type="journal article" date="2010" name="Cell">
        <title>A tissue-specific atlas of mouse protein phosphorylation and expression.</title>
        <authorList>
            <person name="Huttlin E.L."/>
            <person name="Jedrychowski M.P."/>
            <person name="Elias J.E."/>
            <person name="Goswami T."/>
            <person name="Rad R."/>
            <person name="Beausoleil S.A."/>
            <person name="Villen J."/>
            <person name="Haas W."/>
            <person name="Sowa M.E."/>
            <person name="Gygi S.P."/>
        </authorList>
    </citation>
    <scope>PHOSPHORYLATION [LARGE SCALE ANALYSIS] AT SER-115; SER-174 AND TYR-291</scope>
    <scope>IDENTIFICATION BY MASS SPECTROMETRY [LARGE SCALE ANALYSIS]</scope>
    <source>
        <tissue>Brain</tissue>
        <tissue>Brown adipose tissue</tissue>
        <tissue>Heart</tissue>
        <tissue>Kidney</tissue>
        <tissue>Liver</tissue>
        <tissue>Lung</tissue>
        <tissue>Pancreas</tissue>
        <tissue>Spleen</tissue>
        <tissue>Testis</tissue>
    </source>
</reference>
<reference key="7">
    <citation type="journal article" date="2013" name="Mol. Cell">
        <title>SIRT5-mediated lysine desuccinylation impacts diverse metabolic pathways.</title>
        <authorList>
            <person name="Park J."/>
            <person name="Chen Y."/>
            <person name="Tishkoff D.X."/>
            <person name="Peng C."/>
            <person name="Tan M."/>
            <person name="Dai L."/>
            <person name="Xie Z."/>
            <person name="Zhang Y."/>
            <person name="Zwaans B.M."/>
            <person name="Skinner M.E."/>
            <person name="Lombard D.B."/>
            <person name="Zhao Y."/>
        </authorList>
    </citation>
    <scope>ACETYLATION [LARGE SCALE ANALYSIS] AT LYS-19</scope>
    <scope>IDENTIFICATION BY MASS SPECTROMETRY [LARGE SCALE ANALYSIS]</scope>
    <source>
        <tissue>Embryonic fibroblast</tissue>
    </source>
</reference>
<evidence type="ECO:0000256" key="1">
    <source>
        <dbReference type="SAM" id="MobiDB-lite"/>
    </source>
</evidence>
<evidence type="ECO:0000305" key="2"/>
<evidence type="ECO:0007744" key="3">
    <source>
    </source>
</evidence>
<evidence type="ECO:0007744" key="4">
    <source>
    </source>
</evidence>
<evidence type="ECO:0007744" key="5">
    <source>
    </source>
</evidence>
<evidence type="ECO:0007744" key="6">
    <source>
    </source>
</evidence>
<protein>
    <recommendedName>
        <fullName>Uncharacterized protein FLJ45252 homolog</fullName>
    </recommendedName>
</protein>
<name>YJ005_MOUSE</name>
<comment type="caution">
    <text evidence="2">Found in the 3'-UTR of AAK1 but there is evidence for the existence of the protein from a number of proteomics studies.</text>
</comment>
<comment type="sequence caution" evidence="2">
    <conflict type="erroneous initiation">
        <sequence resource="EMBL-CDS" id="AAH28270"/>
    </conflict>
    <text>Extended N-terminus.</text>
</comment>
<comment type="sequence caution" evidence="2">
    <conflict type="erroneous initiation">
        <sequence resource="EMBL-CDS" id="BAC35570"/>
    </conflict>
    <text>Truncated N-terminus.</text>
</comment>
<feature type="chain" id="PRO_0000325933" description="Uncharacterized protein FLJ45252 homolog">
    <location>
        <begin position="1"/>
        <end position="354"/>
    </location>
</feature>
<feature type="region of interest" description="Disordered" evidence="1">
    <location>
        <begin position="1"/>
        <end position="74"/>
    </location>
</feature>
<feature type="region of interest" description="Disordered" evidence="1">
    <location>
        <begin position="87"/>
        <end position="115"/>
    </location>
</feature>
<feature type="region of interest" description="Disordered" evidence="1">
    <location>
        <begin position="182"/>
        <end position="208"/>
    </location>
</feature>
<feature type="region of interest" description="Disordered" evidence="1">
    <location>
        <begin position="235"/>
        <end position="298"/>
    </location>
</feature>
<feature type="compositionally biased region" description="Low complexity" evidence="1">
    <location>
        <begin position="32"/>
        <end position="41"/>
    </location>
</feature>
<feature type="compositionally biased region" description="Acidic residues" evidence="1">
    <location>
        <begin position="45"/>
        <end position="54"/>
    </location>
</feature>
<feature type="compositionally biased region" description="Polar residues" evidence="1">
    <location>
        <begin position="182"/>
        <end position="199"/>
    </location>
</feature>
<feature type="modified residue" description="N6-acetyllysine" evidence="6">
    <location>
        <position position="19"/>
    </location>
</feature>
<feature type="modified residue" description="Phosphoserine" evidence="3 4 5">
    <location>
        <position position="115"/>
    </location>
</feature>
<feature type="modified residue" description="Phosphoserine" evidence="5">
    <location>
        <position position="174"/>
    </location>
</feature>
<feature type="modified residue" description="Phosphotyrosine" evidence="5">
    <location>
        <position position="291"/>
    </location>
</feature>
<feature type="modified residue" description="Phosphoserine" evidence="3">
    <location>
        <position position="292"/>
    </location>
</feature>
<proteinExistence type="evidence at protein level"/>
<organism>
    <name type="scientific">Mus musculus</name>
    <name type="common">Mouse</name>
    <dbReference type="NCBI Taxonomy" id="10090"/>
    <lineage>
        <taxon>Eukaryota</taxon>
        <taxon>Metazoa</taxon>
        <taxon>Chordata</taxon>
        <taxon>Craniata</taxon>
        <taxon>Vertebrata</taxon>
        <taxon>Euteleostomi</taxon>
        <taxon>Mammalia</taxon>
        <taxon>Eutheria</taxon>
        <taxon>Euarchontoglires</taxon>
        <taxon>Glires</taxon>
        <taxon>Rodentia</taxon>
        <taxon>Myomorpha</taxon>
        <taxon>Muroidea</taxon>
        <taxon>Muridae</taxon>
        <taxon>Murinae</taxon>
        <taxon>Mus</taxon>
        <taxon>Mus</taxon>
    </lineage>
</organism>